<proteinExistence type="inferred from homology"/>
<organism>
    <name type="scientific">Pseudomonas putida (strain ATCC 47054 / DSM 6125 / CFBP 8728 / NCIMB 11950 / KT2440)</name>
    <dbReference type="NCBI Taxonomy" id="160488"/>
    <lineage>
        <taxon>Bacteria</taxon>
        <taxon>Pseudomonadati</taxon>
        <taxon>Pseudomonadota</taxon>
        <taxon>Gammaproteobacteria</taxon>
        <taxon>Pseudomonadales</taxon>
        <taxon>Pseudomonadaceae</taxon>
        <taxon>Pseudomonas</taxon>
    </lineage>
</organism>
<comment type="function">
    <text evidence="1">Poorly processive, error-prone DNA polymerase involved in untargeted mutagenesis. Copies undamaged DNA at stalled replication forks, which arise in vivo from mismatched or misaligned primer ends. These misaligned primers can be extended by PolIV. Exhibits no 3'-5' exonuclease (proofreading) activity. May be involved in translesional synthesis, in conjunction with the beta clamp from PolIII.</text>
</comment>
<comment type="catalytic activity">
    <reaction evidence="1">
        <text>DNA(n) + a 2'-deoxyribonucleoside 5'-triphosphate = DNA(n+1) + diphosphate</text>
        <dbReference type="Rhea" id="RHEA:22508"/>
        <dbReference type="Rhea" id="RHEA-COMP:17339"/>
        <dbReference type="Rhea" id="RHEA-COMP:17340"/>
        <dbReference type="ChEBI" id="CHEBI:33019"/>
        <dbReference type="ChEBI" id="CHEBI:61560"/>
        <dbReference type="ChEBI" id="CHEBI:173112"/>
        <dbReference type="EC" id="2.7.7.7"/>
    </reaction>
</comment>
<comment type="cofactor">
    <cofactor evidence="1">
        <name>Mg(2+)</name>
        <dbReference type="ChEBI" id="CHEBI:18420"/>
    </cofactor>
    <text evidence="1">Binds 2 magnesium ions per subunit.</text>
</comment>
<comment type="subunit">
    <text evidence="1">Monomer.</text>
</comment>
<comment type="subcellular location">
    <subcellularLocation>
        <location evidence="1">Cytoplasm</location>
    </subcellularLocation>
</comment>
<comment type="similarity">
    <text evidence="1">Belongs to the DNA polymerase type-Y family.</text>
</comment>
<gene>
    <name evidence="1" type="primary">dinB</name>
    <name type="synonym">dinP</name>
    <name type="ordered locus">PP_1203</name>
</gene>
<protein>
    <recommendedName>
        <fullName evidence="1">DNA polymerase IV</fullName>
        <shortName evidence="1">Pol IV</shortName>
        <ecNumber evidence="1">2.7.7.7</ecNumber>
    </recommendedName>
</protein>
<feature type="chain" id="PRO_0000173933" description="DNA polymerase IV">
    <location>
        <begin position="1"/>
        <end position="354"/>
    </location>
</feature>
<feature type="domain" description="UmuC" evidence="1">
    <location>
        <begin position="6"/>
        <end position="187"/>
    </location>
</feature>
<feature type="active site" evidence="1">
    <location>
        <position position="106"/>
    </location>
</feature>
<feature type="binding site" evidence="1">
    <location>
        <position position="10"/>
    </location>
    <ligand>
        <name>Mg(2+)</name>
        <dbReference type="ChEBI" id="CHEBI:18420"/>
    </ligand>
</feature>
<feature type="binding site" evidence="1">
    <location>
        <position position="105"/>
    </location>
    <ligand>
        <name>Mg(2+)</name>
        <dbReference type="ChEBI" id="CHEBI:18420"/>
    </ligand>
</feature>
<feature type="site" description="Substrate discrimination" evidence="1">
    <location>
        <position position="15"/>
    </location>
</feature>
<name>DPO4_PSEPK</name>
<sequence>MSLRKIIHVDCDCFYAAIEMRDDPRLAGRPMAVGGSPDHRGVIATCNYEARAYGVRSAMSSRHALKLCPDLLIVKPRFEAYREASREIHTIFRDYTELIEPLSLDEAYLDVSDSQWYSGSATRIAEDIRRRVARTLHITVSAGVAPNKFLAKIASDWRKPNGLFVITPNEVETFVAALPVARLHGVGKVTADKLTRLGIETCLHLREWSRLALVREFGSFGERLWGLARGIDERAVHNDSRRQSVSVENTYDTDLPDLASCLARLPELLDSLNERIARMDSSYRPDKPFVKVKFHDFSQTTMEQAGAGRDLESYRQLLGQAFARGGKPVRLLGVGVRLRDLRGAHEQLELFPPK</sequence>
<accession>Q88NK4</accession>
<evidence type="ECO:0000255" key="1">
    <source>
        <dbReference type="HAMAP-Rule" id="MF_01113"/>
    </source>
</evidence>
<dbReference type="EC" id="2.7.7.7" evidence="1"/>
<dbReference type="EMBL" id="AE015451">
    <property type="protein sequence ID" value="AAN66827.1"/>
    <property type="molecule type" value="Genomic_DNA"/>
</dbReference>
<dbReference type="RefSeq" id="NP_743363.1">
    <property type="nucleotide sequence ID" value="NC_002947.4"/>
</dbReference>
<dbReference type="SMR" id="Q88NK4"/>
<dbReference type="STRING" id="160488.PP_1203"/>
<dbReference type="PaxDb" id="160488-PP_1203"/>
<dbReference type="KEGG" id="ppu:PP_1203"/>
<dbReference type="PATRIC" id="fig|160488.4.peg.1278"/>
<dbReference type="eggNOG" id="COG0389">
    <property type="taxonomic scope" value="Bacteria"/>
</dbReference>
<dbReference type="HOGENOM" id="CLU_012348_1_2_6"/>
<dbReference type="OrthoDB" id="9808813at2"/>
<dbReference type="PhylomeDB" id="Q88NK4"/>
<dbReference type="BioCyc" id="PPUT160488:G1G01-1288-MONOMER"/>
<dbReference type="Proteomes" id="UP000000556">
    <property type="component" value="Chromosome"/>
</dbReference>
<dbReference type="GO" id="GO:0005829">
    <property type="term" value="C:cytosol"/>
    <property type="evidence" value="ECO:0007669"/>
    <property type="project" value="TreeGrafter"/>
</dbReference>
<dbReference type="GO" id="GO:0003684">
    <property type="term" value="F:damaged DNA binding"/>
    <property type="evidence" value="ECO:0007669"/>
    <property type="project" value="InterPro"/>
</dbReference>
<dbReference type="GO" id="GO:0003887">
    <property type="term" value="F:DNA-directed DNA polymerase activity"/>
    <property type="evidence" value="ECO:0007669"/>
    <property type="project" value="UniProtKB-UniRule"/>
</dbReference>
<dbReference type="GO" id="GO:0000287">
    <property type="term" value="F:magnesium ion binding"/>
    <property type="evidence" value="ECO:0007669"/>
    <property type="project" value="UniProtKB-UniRule"/>
</dbReference>
<dbReference type="GO" id="GO:0006261">
    <property type="term" value="P:DNA-templated DNA replication"/>
    <property type="evidence" value="ECO:0007669"/>
    <property type="project" value="UniProtKB-UniRule"/>
</dbReference>
<dbReference type="GO" id="GO:0042276">
    <property type="term" value="P:error-prone translesion synthesis"/>
    <property type="evidence" value="ECO:0007669"/>
    <property type="project" value="TreeGrafter"/>
</dbReference>
<dbReference type="GO" id="GO:0009432">
    <property type="term" value="P:SOS response"/>
    <property type="evidence" value="ECO:0007669"/>
    <property type="project" value="TreeGrafter"/>
</dbReference>
<dbReference type="CDD" id="cd03586">
    <property type="entry name" value="PolY_Pol_IV_kappa"/>
    <property type="match status" value="1"/>
</dbReference>
<dbReference type="FunFam" id="1.10.150.20:FF:000019">
    <property type="entry name" value="DNA polymerase IV"/>
    <property type="match status" value="1"/>
</dbReference>
<dbReference type="FunFam" id="3.30.70.270:FF:000002">
    <property type="entry name" value="DNA polymerase IV"/>
    <property type="match status" value="1"/>
</dbReference>
<dbReference type="FunFam" id="3.40.1170.60:FF:000001">
    <property type="entry name" value="DNA polymerase IV"/>
    <property type="match status" value="1"/>
</dbReference>
<dbReference type="Gene3D" id="3.30.70.270">
    <property type="match status" value="1"/>
</dbReference>
<dbReference type="Gene3D" id="3.40.1170.60">
    <property type="match status" value="1"/>
</dbReference>
<dbReference type="Gene3D" id="1.10.150.20">
    <property type="entry name" value="5' to 3' exonuclease, C-terminal subdomain"/>
    <property type="match status" value="1"/>
</dbReference>
<dbReference type="Gene3D" id="3.30.1490.100">
    <property type="entry name" value="DNA polymerase, Y-family, little finger domain"/>
    <property type="match status" value="1"/>
</dbReference>
<dbReference type="HAMAP" id="MF_01113">
    <property type="entry name" value="DNApol_IV"/>
    <property type="match status" value="1"/>
</dbReference>
<dbReference type="InterPro" id="IPR043502">
    <property type="entry name" value="DNA/RNA_pol_sf"/>
</dbReference>
<dbReference type="InterPro" id="IPR036775">
    <property type="entry name" value="DNA_pol_Y-fam_lit_finger_sf"/>
</dbReference>
<dbReference type="InterPro" id="IPR017961">
    <property type="entry name" value="DNA_pol_Y-fam_little_finger"/>
</dbReference>
<dbReference type="InterPro" id="IPR050116">
    <property type="entry name" value="DNA_polymerase-Y"/>
</dbReference>
<dbReference type="InterPro" id="IPR022880">
    <property type="entry name" value="DNApol_IV"/>
</dbReference>
<dbReference type="InterPro" id="IPR053848">
    <property type="entry name" value="IMS_HHH_1"/>
</dbReference>
<dbReference type="InterPro" id="IPR043128">
    <property type="entry name" value="Rev_trsase/Diguanyl_cyclase"/>
</dbReference>
<dbReference type="InterPro" id="IPR001126">
    <property type="entry name" value="UmuC"/>
</dbReference>
<dbReference type="NCBIfam" id="NF002677">
    <property type="entry name" value="PRK02406.1"/>
    <property type="match status" value="1"/>
</dbReference>
<dbReference type="PANTHER" id="PTHR11076:SF33">
    <property type="entry name" value="DNA POLYMERASE KAPPA"/>
    <property type="match status" value="1"/>
</dbReference>
<dbReference type="PANTHER" id="PTHR11076">
    <property type="entry name" value="DNA REPAIR POLYMERASE UMUC / TRANSFERASE FAMILY MEMBER"/>
    <property type="match status" value="1"/>
</dbReference>
<dbReference type="Pfam" id="PF00817">
    <property type="entry name" value="IMS"/>
    <property type="match status" value="1"/>
</dbReference>
<dbReference type="Pfam" id="PF11799">
    <property type="entry name" value="IMS_C"/>
    <property type="match status" value="1"/>
</dbReference>
<dbReference type="Pfam" id="PF21999">
    <property type="entry name" value="IMS_HHH_1"/>
    <property type="match status" value="1"/>
</dbReference>
<dbReference type="SUPFAM" id="SSF56672">
    <property type="entry name" value="DNA/RNA polymerases"/>
    <property type="match status" value="1"/>
</dbReference>
<dbReference type="SUPFAM" id="SSF100879">
    <property type="entry name" value="Lesion bypass DNA polymerase (Y-family), little finger domain"/>
    <property type="match status" value="1"/>
</dbReference>
<dbReference type="PROSITE" id="PS50173">
    <property type="entry name" value="UMUC"/>
    <property type="match status" value="1"/>
</dbReference>
<keyword id="KW-0963">Cytoplasm</keyword>
<keyword id="KW-0227">DNA damage</keyword>
<keyword id="KW-0234">DNA repair</keyword>
<keyword id="KW-0235">DNA replication</keyword>
<keyword id="KW-0238">DNA-binding</keyword>
<keyword id="KW-0239">DNA-directed DNA polymerase</keyword>
<keyword id="KW-0460">Magnesium</keyword>
<keyword id="KW-0479">Metal-binding</keyword>
<keyword id="KW-0515">Mutator protein</keyword>
<keyword id="KW-0548">Nucleotidyltransferase</keyword>
<keyword id="KW-1185">Reference proteome</keyword>
<keyword id="KW-0808">Transferase</keyword>
<reference key="1">
    <citation type="journal article" date="2002" name="Environ. Microbiol.">
        <title>Complete genome sequence and comparative analysis of the metabolically versatile Pseudomonas putida KT2440.</title>
        <authorList>
            <person name="Nelson K.E."/>
            <person name="Weinel C."/>
            <person name="Paulsen I.T."/>
            <person name="Dodson R.J."/>
            <person name="Hilbert H."/>
            <person name="Martins dos Santos V.A.P."/>
            <person name="Fouts D.E."/>
            <person name="Gill S.R."/>
            <person name="Pop M."/>
            <person name="Holmes M."/>
            <person name="Brinkac L.M."/>
            <person name="Beanan M.J."/>
            <person name="DeBoy R.T."/>
            <person name="Daugherty S.C."/>
            <person name="Kolonay J.F."/>
            <person name="Madupu R."/>
            <person name="Nelson W.C."/>
            <person name="White O."/>
            <person name="Peterson J.D."/>
            <person name="Khouri H.M."/>
            <person name="Hance I."/>
            <person name="Chris Lee P."/>
            <person name="Holtzapple E.K."/>
            <person name="Scanlan D."/>
            <person name="Tran K."/>
            <person name="Moazzez A."/>
            <person name="Utterback T.R."/>
            <person name="Rizzo M."/>
            <person name="Lee K."/>
            <person name="Kosack D."/>
            <person name="Moestl D."/>
            <person name="Wedler H."/>
            <person name="Lauber J."/>
            <person name="Stjepandic D."/>
            <person name="Hoheisel J."/>
            <person name="Straetz M."/>
            <person name="Heim S."/>
            <person name="Kiewitz C."/>
            <person name="Eisen J.A."/>
            <person name="Timmis K.N."/>
            <person name="Duesterhoeft A."/>
            <person name="Tuemmler B."/>
            <person name="Fraser C.M."/>
        </authorList>
    </citation>
    <scope>NUCLEOTIDE SEQUENCE [LARGE SCALE GENOMIC DNA]</scope>
    <source>
        <strain>ATCC 47054 / DSM 6125 / CFBP 8728 / NCIMB 11950 / KT2440</strain>
    </source>
</reference>